<dbReference type="EMBL" id="D10391">
    <property type="protein sequence ID" value="BAA01230.1"/>
    <property type="molecule type" value="Genomic_DNA"/>
</dbReference>
<dbReference type="EMBL" id="U00096">
    <property type="protein sequence ID" value="AAC74105.1"/>
    <property type="molecule type" value="Genomic_DNA"/>
</dbReference>
<dbReference type="EMBL" id="AP009048">
    <property type="protein sequence ID" value="BAA35801.1"/>
    <property type="molecule type" value="Genomic_DNA"/>
</dbReference>
<dbReference type="PIR" id="B47065">
    <property type="entry name" value="B47065"/>
</dbReference>
<dbReference type="RefSeq" id="NP_415539.1">
    <property type="nucleotide sequence ID" value="NC_000913.3"/>
</dbReference>
<dbReference type="SMR" id="P0A9K1"/>
<dbReference type="BioGRID" id="4260054">
    <property type="interactions" value="9"/>
</dbReference>
<dbReference type="DIP" id="DIP-10499N"/>
<dbReference type="FunCoup" id="P0A9K1">
    <property type="interactions" value="6"/>
</dbReference>
<dbReference type="STRING" id="511145.b1020"/>
<dbReference type="PaxDb" id="511145-b1020"/>
<dbReference type="EnsemblBacteria" id="AAC74105">
    <property type="protein sequence ID" value="AAC74105"/>
    <property type="gene ID" value="b1020"/>
</dbReference>
<dbReference type="GeneID" id="948010"/>
<dbReference type="KEGG" id="ecj:JW1005"/>
<dbReference type="KEGG" id="eco:b1020"/>
<dbReference type="PATRIC" id="fig|511145.12.peg.1060"/>
<dbReference type="EchoBASE" id="EB1685"/>
<dbReference type="eggNOG" id="COG1702">
    <property type="taxonomic scope" value="Bacteria"/>
</dbReference>
<dbReference type="HOGENOM" id="CLU_051654_4_0_6"/>
<dbReference type="InParanoid" id="P0A9K1"/>
<dbReference type="OMA" id="EAQNCTY"/>
<dbReference type="OrthoDB" id="9805148at2"/>
<dbReference type="PhylomeDB" id="P0A9K1"/>
<dbReference type="BioCyc" id="EcoCyc:EG11734-MONOMER"/>
<dbReference type="PRO" id="PR:P0A9K1"/>
<dbReference type="Proteomes" id="UP000000625">
    <property type="component" value="Chromosome"/>
</dbReference>
<dbReference type="GO" id="GO:0005829">
    <property type="term" value="C:cytosol"/>
    <property type="evidence" value="ECO:0000318"/>
    <property type="project" value="GO_Central"/>
</dbReference>
<dbReference type="GO" id="GO:0005524">
    <property type="term" value="F:ATP binding"/>
    <property type="evidence" value="ECO:0000314"/>
    <property type="project" value="EcoCyc"/>
</dbReference>
<dbReference type="FunFam" id="3.40.50.300:FF:000455">
    <property type="entry name" value="Phosphate starvation-inducible ATPase PhoH"/>
    <property type="match status" value="1"/>
</dbReference>
<dbReference type="Gene3D" id="3.40.50.300">
    <property type="entry name" value="P-loop containing nucleotide triphosphate hydrolases"/>
    <property type="match status" value="1"/>
</dbReference>
<dbReference type="InterPro" id="IPR027417">
    <property type="entry name" value="P-loop_NTPase"/>
</dbReference>
<dbReference type="InterPro" id="IPR003714">
    <property type="entry name" value="PhoH"/>
</dbReference>
<dbReference type="InterPro" id="IPR051451">
    <property type="entry name" value="PhoH2-like"/>
</dbReference>
<dbReference type="NCBIfam" id="NF007827">
    <property type="entry name" value="PRK10536.1"/>
    <property type="match status" value="1"/>
</dbReference>
<dbReference type="PANTHER" id="PTHR30473">
    <property type="entry name" value="PROTEIN PHOH"/>
    <property type="match status" value="1"/>
</dbReference>
<dbReference type="PANTHER" id="PTHR30473:SF3">
    <property type="entry name" value="PROTEIN PHOH"/>
    <property type="match status" value="1"/>
</dbReference>
<dbReference type="Pfam" id="PF02562">
    <property type="entry name" value="PhoH"/>
    <property type="match status" value="1"/>
</dbReference>
<dbReference type="SUPFAM" id="SSF52540">
    <property type="entry name" value="P-loop containing nucleoside triphosphate hydrolases"/>
    <property type="match status" value="1"/>
</dbReference>
<organism>
    <name type="scientific">Escherichia coli (strain K12)</name>
    <dbReference type="NCBI Taxonomy" id="83333"/>
    <lineage>
        <taxon>Bacteria</taxon>
        <taxon>Pseudomonadati</taxon>
        <taxon>Pseudomonadota</taxon>
        <taxon>Gammaproteobacteria</taxon>
        <taxon>Enterobacterales</taxon>
        <taxon>Enterobacteriaceae</taxon>
        <taxon>Escherichia</taxon>
    </lineage>
</organism>
<name>PHOH_ECOLI</name>
<gene>
    <name type="primary">phoH</name>
    <name type="synonym">psiH</name>
    <name type="ordered locus">b1020</name>
    <name type="ordered locus">JW1005</name>
</gene>
<sequence length="354" mass="39265">MVTSCTGHVLDNQRATTRGVFSSGSHLVTLHFQPHPFFSCVTDAVNGARSRFSAFYPKANYGLQGSQPSDVRAHNRAANGACDEYKQLKVLSMGRQKAVIKARREAKRVLRRDSRSHKQREEESVTSLVQMGGVEAIGMARDSRDTSPILARNEAQLHYLKAIESKQLIFATGEAGCGKTWISAAKAAEALIHKDVDRIIVTRPVLQADEDLGFLPGDIAEKFAPYFRPVYDVLVRRLGASFMQYCLRPEIGKVEIAPFAYMRGRTFENAVVILDEAQNVTAAQMKMFLTRLGENVTVIVNGDITQCDLPRGVCSGLSDALERFEEDEMVGIVRFGKEDCVRSALCQRTLHAYS</sequence>
<protein>
    <recommendedName>
        <fullName>Protein PhoH</fullName>
    </recommendedName>
    <alternativeName>
        <fullName>Phosphate starvation-inducible protein PsiH</fullName>
    </alternativeName>
</protein>
<keyword id="KW-0067">ATP-binding</keyword>
<keyword id="KW-0963">Cytoplasm</keyword>
<keyword id="KW-0903">Direct protein sequencing</keyword>
<keyword id="KW-0547">Nucleotide-binding</keyword>
<keyword id="KW-1185">Reference proteome</keyword>
<keyword id="KW-0346">Stress response</keyword>
<accession>P0A9K1</accession>
<accession>P31544</accession>
<feature type="chain" id="PRO_0000201150" description="Protein PhoH">
    <location>
        <begin position="1"/>
        <end position="354"/>
    </location>
</feature>
<feature type="binding site" evidence="1">
    <location>
        <begin position="173"/>
        <end position="180"/>
    </location>
    <ligand>
        <name>ATP</name>
        <dbReference type="ChEBI" id="CHEBI:30616"/>
    </ligand>
</feature>
<reference key="1">
    <citation type="journal article" date="1993" name="J. Bacteriol.">
        <title>Molecular analysis of the phoH gene, belonging to the phosphate regulon in Escherichia coli.</title>
        <authorList>
            <person name="Kim S.-K."/>
            <person name="Makino K."/>
            <person name="Amemura M."/>
            <person name="Shinagawa H."/>
            <person name="Nakata A."/>
        </authorList>
    </citation>
    <scope>NUCLEOTIDE SEQUENCE [GENOMIC DNA]</scope>
    <scope>PROTEIN SEQUENCE OF 1-15</scope>
    <source>
        <strain>K12</strain>
    </source>
</reference>
<reference key="2">
    <citation type="journal article" date="1996" name="DNA Res.">
        <title>A 718-kb DNA sequence of the Escherichia coli K-12 genome corresponding to the 12.7-28.0 min region on the linkage map.</title>
        <authorList>
            <person name="Oshima T."/>
            <person name="Aiba H."/>
            <person name="Baba T."/>
            <person name="Fujita K."/>
            <person name="Hayashi K."/>
            <person name="Honjo A."/>
            <person name="Ikemoto K."/>
            <person name="Inada T."/>
            <person name="Itoh T."/>
            <person name="Kajihara M."/>
            <person name="Kanai K."/>
            <person name="Kashimoto K."/>
            <person name="Kimura S."/>
            <person name="Kitagawa M."/>
            <person name="Makino K."/>
            <person name="Masuda S."/>
            <person name="Miki T."/>
            <person name="Mizobuchi K."/>
            <person name="Mori H."/>
            <person name="Motomura K."/>
            <person name="Nakamura Y."/>
            <person name="Nashimoto H."/>
            <person name="Nishio Y."/>
            <person name="Saito N."/>
            <person name="Sampei G."/>
            <person name="Seki Y."/>
            <person name="Tagami H."/>
            <person name="Takemoto K."/>
            <person name="Wada C."/>
            <person name="Yamamoto Y."/>
            <person name="Yano M."/>
            <person name="Horiuchi T."/>
        </authorList>
    </citation>
    <scope>NUCLEOTIDE SEQUENCE [LARGE SCALE GENOMIC DNA]</scope>
    <source>
        <strain>K12 / W3110 / ATCC 27325 / DSM 5911</strain>
    </source>
</reference>
<reference key="3">
    <citation type="journal article" date="1997" name="Science">
        <title>The complete genome sequence of Escherichia coli K-12.</title>
        <authorList>
            <person name="Blattner F.R."/>
            <person name="Plunkett G. III"/>
            <person name="Bloch C.A."/>
            <person name="Perna N.T."/>
            <person name="Burland V."/>
            <person name="Riley M."/>
            <person name="Collado-Vides J."/>
            <person name="Glasner J.D."/>
            <person name="Rode C.K."/>
            <person name="Mayhew G.F."/>
            <person name="Gregor J."/>
            <person name="Davis N.W."/>
            <person name="Kirkpatrick H.A."/>
            <person name="Goeden M.A."/>
            <person name="Rose D.J."/>
            <person name="Mau B."/>
            <person name="Shao Y."/>
        </authorList>
    </citation>
    <scope>NUCLEOTIDE SEQUENCE [LARGE SCALE GENOMIC DNA]</scope>
    <source>
        <strain>K12 / MG1655 / ATCC 47076</strain>
    </source>
</reference>
<reference key="4">
    <citation type="journal article" date="2006" name="Mol. Syst. Biol.">
        <title>Highly accurate genome sequences of Escherichia coli K-12 strains MG1655 and W3110.</title>
        <authorList>
            <person name="Hayashi K."/>
            <person name="Morooka N."/>
            <person name="Yamamoto Y."/>
            <person name="Fujita K."/>
            <person name="Isono K."/>
            <person name="Choi S."/>
            <person name="Ohtsubo E."/>
            <person name="Baba T."/>
            <person name="Wanner B.L."/>
            <person name="Mori H."/>
            <person name="Horiuchi T."/>
        </authorList>
    </citation>
    <scope>NUCLEOTIDE SEQUENCE [LARGE SCALE GENOMIC DNA]</scope>
    <source>
        <strain>K12 / W3110 / ATCC 27325 / DSM 5911</strain>
    </source>
</reference>
<reference key="5">
    <citation type="journal article" date="1990" name="J. Bacteriol.">
        <title>Identification of phosphate starvation-inducible genes in Escherichia coli K-12 by DNA sequence analysis of psi::lacZ(Mu d1) transcriptional fusions.</title>
        <authorList>
            <person name="Metcalf W.W."/>
            <person name="Steed P.M."/>
            <person name="Wanner B.L."/>
        </authorList>
    </citation>
    <scope>CHARACTERIZATION</scope>
    <source>
        <strain>K12</strain>
    </source>
</reference>
<proteinExistence type="evidence at protein level"/>
<comment type="subcellular location">
    <subcellularLocation>
        <location>Cytoplasm</location>
    </subcellularLocation>
</comment>
<comment type="induction">
    <text>By phosphate starvation.</text>
</comment>
<comment type="similarity">
    <text evidence="2">Belongs to the PhoH family.</text>
</comment>
<evidence type="ECO:0000255" key="1"/>
<evidence type="ECO:0000305" key="2"/>